<sequence length="430" mass="48152">MEKYDLLIKNVLIPEKEGEWDIAVKDGKIEKIGKNIVGEAKYTINGKGKIAFPSFANMHTHISMTLLRGLGADLPLHDWLQKVIWPLEGEFVSPEFVKDGALLGIVESIRSGTTLFMDMYFFEEAVAEACEDVGIRAGLGFGILDFPTKVAKTPEEYIQRARKFAEEFKNRELVFPVICPHAPYTCSPNTLRMAKELADEYGLLLHIHVAETKEEVERIKEQYGKTPVEHLESIGFLDKNVLCAHMVWTTEKEREILKERDVKIAHCPESNLKLASGIAPVPDYVKRGITVTLGTDGAASNDNLNMLEETSTCAKFHKGYNLDAKAIDAGTALKIATENGFKVAGIKAGKVEEGYEADLILVDTDFPEFQPLYDPISQFVYSANSECIDTVICKGKVLMEKRELKTVDQEEIFAKARKWREKILSKLSSL</sequence>
<name>MTAD_AQUAE</name>
<feature type="chain" id="PRO_0000122304" description="5-methylthioadenosine/S-adenosylhomocysteine deaminase">
    <location>
        <begin position="1"/>
        <end position="430"/>
    </location>
</feature>
<feature type="binding site" evidence="1">
    <location>
        <position position="59"/>
    </location>
    <ligand>
        <name>Zn(2+)</name>
        <dbReference type="ChEBI" id="CHEBI:29105"/>
    </ligand>
</feature>
<feature type="binding site" evidence="1">
    <location>
        <position position="61"/>
    </location>
    <ligand>
        <name>Zn(2+)</name>
        <dbReference type="ChEBI" id="CHEBI:29105"/>
    </ligand>
</feature>
<feature type="binding site" evidence="1">
    <location>
        <position position="88"/>
    </location>
    <ligand>
        <name>substrate</name>
    </ligand>
</feature>
<feature type="binding site" evidence="1">
    <location>
        <position position="181"/>
    </location>
    <ligand>
        <name>substrate</name>
    </ligand>
</feature>
<feature type="binding site" evidence="1">
    <location>
        <position position="208"/>
    </location>
    <ligand>
        <name>Zn(2+)</name>
        <dbReference type="ChEBI" id="CHEBI:29105"/>
    </ligand>
</feature>
<feature type="binding site" evidence="1">
    <location>
        <position position="211"/>
    </location>
    <ligand>
        <name>substrate</name>
    </ligand>
</feature>
<feature type="binding site" evidence="1">
    <location>
        <position position="296"/>
    </location>
    <ligand>
        <name>substrate</name>
    </ligand>
</feature>
<feature type="binding site" evidence="1">
    <location>
        <position position="296"/>
    </location>
    <ligand>
        <name>Zn(2+)</name>
        <dbReference type="ChEBI" id="CHEBI:29105"/>
    </ligand>
</feature>
<keyword id="KW-0378">Hydrolase</keyword>
<keyword id="KW-0479">Metal-binding</keyword>
<keyword id="KW-1185">Reference proteome</keyword>
<keyword id="KW-0862">Zinc</keyword>
<reference key="1">
    <citation type="journal article" date="1998" name="Nature">
        <title>The complete genome of the hyperthermophilic bacterium Aquifex aeolicus.</title>
        <authorList>
            <person name="Deckert G."/>
            <person name="Warren P.V."/>
            <person name="Gaasterland T."/>
            <person name="Young W.G."/>
            <person name="Lenox A.L."/>
            <person name="Graham D.E."/>
            <person name="Overbeek R."/>
            <person name="Snead M.A."/>
            <person name="Keller M."/>
            <person name="Aujay M."/>
            <person name="Huber R."/>
            <person name="Feldman R.A."/>
            <person name="Short J.M."/>
            <person name="Olsen G.J."/>
            <person name="Swanson R.V."/>
        </authorList>
    </citation>
    <scope>NUCLEOTIDE SEQUENCE [LARGE SCALE GENOMIC DNA]</scope>
    <source>
        <strain>VF5</strain>
    </source>
</reference>
<protein>
    <recommendedName>
        <fullName evidence="1">5-methylthioadenosine/S-adenosylhomocysteine deaminase</fullName>
        <shortName evidence="1">MTA/SAH deaminase</shortName>
        <ecNumber evidence="1">3.5.4.28</ecNumber>
        <ecNumber evidence="1">3.5.4.31</ecNumber>
    </recommendedName>
</protein>
<comment type="function">
    <text evidence="1">Catalyzes the deamination of 5-methylthioadenosine and S-adenosyl-L-homocysteine into 5-methylthioinosine and S-inosyl-L-homocysteine, respectively. Is also able to deaminate adenosine.</text>
</comment>
<comment type="catalytic activity">
    <reaction evidence="1">
        <text>S-adenosyl-L-homocysteine + H2O + H(+) = S-inosyl-L-homocysteine + NH4(+)</text>
        <dbReference type="Rhea" id="RHEA:20716"/>
        <dbReference type="ChEBI" id="CHEBI:15377"/>
        <dbReference type="ChEBI" id="CHEBI:15378"/>
        <dbReference type="ChEBI" id="CHEBI:28938"/>
        <dbReference type="ChEBI" id="CHEBI:57856"/>
        <dbReference type="ChEBI" id="CHEBI:57985"/>
        <dbReference type="EC" id="3.5.4.28"/>
    </reaction>
</comment>
<comment type="catalytic activity">
    <reaction evidence="1">
        <text>S-methyl-5'-thioadenosine + H2O + H(+) = S-methyl-5'-thioinosine + NH4(+)</text>
        <dbReference type="Rhea" id="RHEA:25025"/>
        <dbReference type="ChEBI" id="CHEBI:15377"/>
        <dbReference type="ChEBI" id="CHEBI:15378"/>
        <dbReference type="ChEBI" id="CHEBI:17509"/>
        <dbReference type="ChEBI" id="CHEBI:28938"/>
        <dbReference type="ChEBI" id="CHEBI:48595"/>
        <dbReference type="EC" id="3.5.4.31"/>
    </reaction>
</comment>
<comment type="cofactor">
    <cofactor evidence="1">
        <name>Zn(2+)</name>
        <dbReference type="ChEBI" id="CHEBI:29105"/>
    </cofactor>
    <text evidence="1">Binds 1 zinc ion per subunit.</text>
</comment>
<comment type="similarity">
    <text evidence="1">Belongs to the metallo-dependent hydrolases superfamily. MTA/SAH deaminase family.</text>
</comment>
<evidence type="ECO:0000255" key="1">
    <source>
        <dbReference type="HAMAP-Rule" id="MF_01281"/>
    </source>
</evidence>
<accession>O66851</accession>
<dbReference type="EC" id="3.5.4.28" evidence="1"/>
<dbReference type="EC" id="3.5.4.31" evidence="1"/>
<dbReference type="EMBL" id="AE000657">
    <property type="protein sequence ID" value="AAC06815.1"/>
    <property type="molecule type" value="Genomic_DNA"/>
</dbReference>
<dbReference type="PIR" id="G70352">
    <property type="entry name" value="G70352"/>
</dbReference>
<dbReference type="RefSeq" id="NP_213411.1">
    <property type="nucleotide sequence ID" value="NC_000918.1"/>
</dbReference>
<dbReference type="RefSeq" id="WP_010880349.1">
    <property type="nucleotide sequence ID" value="NC_000918.1"/>
</dbReference>
<dbReference type="SMR" id="O66851"/>
<dbReference type="FunCoup" id="O66851">
    <property type="interactions" value="314"/>
</dbReference>
<dbReference type="STRING" id="224324.aq_587"/>
<dbReference type="EnsemblBacteria" id="AAC06815">
    <property type="protein sequence ID" value="AAC06815"/>
    <property type="gene ID" value="aq_587"/>
</dbReference>
<dbReference type="KEGG" id="aae:aq_587"/>
<dbReference type="PATRIC" id="fig|224324.8.peg.479"/>
<dbReference type="eggNOG" id="COG0402">
    <property type="taxonomic scope" value="Bacteria"/>
</dbReference>
<dbReference type="HOGENOM" id="CLU_012358_2_1_0"/>
<dbReference type="InParanoid" id="O66851"/>
<dbReference type="OrthoDB" id="9807210at2"/>
<dbReference type="Proteomes" id="UP000000798">
    <property type="component" value="Chromosome"/>
</dbReference>
<dbReference type="GO" id="GO:0090614">
    <property type="term" value="F:5'-methylthioadenosine deaminase activity"/>
    <property type="evidence" value="ECO:0007669"/>
    <property type="project" value="UniProtKB-UniRule"/>
</dbReference>
<dbReference type="GO" id="GO:0046872">
    <property type="term" value="F:metal ion binding"/>
    <property type="evidence" value="ECO:0007669"/>
    <property type="project" value="UniProtKB-KW"/>
</dbReference>
<dbReference type="GO" id="GO:0050270">
    <property type="term" value="F:S-adenosylhomocysteine deaminase activity"/>
    <property type="evidence" value="ECO:0007669"/>
    <property type="project" value="UniProtKB-UniRule"/>
</dbReference>
<dbReference type="CDD" id="cd01298">
    <property type="entry name" value="ATZ_TRZ_like"/>
    <property type="match status" value="1"/>
</dbReference>
<dbReference type="FunFam" id="3.20.20.140:FF:000014">
    <property type="entry name" value="5-methylthioadenosine/S-adenosylhomocysteine deaminase"/>
    <property type="match status" value="1"/>
</dbReference>
<dbReference type="Gene3D" id="3.20.20.140">
    <property type="entry name" value="Metal-dependent hydrolases"/>
    <property type="match status" value="1"/>
</dbReference>
<dbReference type="Gene3D" id="2.30.40.10">
    <property type="entry name" value="Urease, subunit C, domain 1"/>
    <property type="match status" value="1"/>
</dbReference>
<dbReference type="HAMAP" id="MF_01281">
    <property type="entry name" value="MTA_SAH_deamin"/>
    <property type="match status" value="1"/>
</dbReference>
<dbReference type="InterPro" id="IPR006680">
    <property type="entry name" value="Amidohydro-rel"/>
</dbReference>
<dbReference type="InterPro" id="IPR023512">
    <property type="entry name" value="Deaminase_MtaD/DadD"/>
</dbReference>
<dbReference type="InterPro" id="IPR011059">
    <property type="entry name" value="Metal-dep_hydrolase_composite"/>
</dbReference>
<dbReference type="InterPro" id="IPR032466">
    <property type="entry name" value="Metal_Hydrolase"/>
</dbReference>
<dbReference type="InterPro" id="IPR050287">
    <property type="entry name" value="MTA/SAH_deaminase"/>
</dbReference>
<dbReference type="PANTHER" id="PTHR43794:SF11">
    <property type="entry name" value="AMIDOHYDROLASE-RELATED DOMAIN-CONTAINING PROTEIN"/>
    <property type="match status" value="1"/>
</dbReference>
<dbReference type="PANTHER" id="PTHR43794">
    <property type="entry name" value="AMINOHYDROLASE SSNA-RELATED"/>
    <property type="match status" value="1"/>
</dbReference>
<dbReference type="Pfam" id="PF01979">
    <property type="entry name" value="Amidohydro_1"/>
    <property type="match status" value="1"/>
</dbReference>
<dbReference type="SUPFAM" id="SSF51338">
    <property type="entry name" value="Composite domain of metallo-dependent hydrolases"/>
    <property type="match status" value="1"/>
</dbReference>
<dbReference type="SUPFAM" id="SSF51556">
    <property type="entry name" value="Metallo-dependent hydrolases"/>
    <property type="match status" value="1"/>
</dbReference>
<gene>
    <name evidence="1" type="primary">mtaD</name>
    <name type="ordered locus">aq_587</name>
</gene>
<proteinExistence type="inferred from homology"/>
<organism>
    <name type="scientific">Aquifex aeolicus (strain VF5)</name>
    <dbReference type="NCBI Taxonomy" id="224324"/>
    <lineage>
        <taxon>Bacteria</taxon>
        <taxon>Pseudomonadati</taxon>
        <taxon>Aquificota</taxon>
        <taxon>Aquificia</taxon>
        <taxon>Aquificales</taxon>
        <taxon>Aquificaceae</taxon>
        <taxon>Aquifex</taxon>
    </lineage>
</organism>